<dbReference type="EC" id="2.1.1.-"/>
<dbReference type="EMBL" id="CP000656">
    <property type="protein sequence ID" value="ABP43929.1"/>
    <property type="molecule type" value="Genomic_DNA"/>
</dbReference>
<dbReference type="SMR" id="A4T5L0"/>
<dbReference type="STRING" id="350054.Mflv_1447"/>
<dbReference type="KEGG" id="mgi:Mflv_1447"/>
<dbReference type="eggNOG" id="COG0566">
    <property type="taxonomic scope" value="Bacteria"/>
</dbReference>
<dbReference type="HOGENOM" id="CLU_021322_0_0_11"/>
<dbReference type="OrthoDB" id="9785673at2"/>
<dbReference type="GO" id="GO:0005829">
    <property type="term" value="C:cytosol"/>
    <property type="evidence" value="ECO:0007669"/>
    <property type="project" value="TreeGrafter"/>
</dbReference>
<dbReference type="GO" id="GO:0003723">
    <property type="term" value="F:RNA binding"/>
    <property type="evidence" value="ECO:0007669"/>
    <property type="project" value="InterPro"/>
</dbReference>
<dbReference type="GO" id="GO:0008173">
    <property type="term" value="F:RNA methyltransferase activity"/>
    <property type="evidence" value="ECO:0007669"/>
    <property type="project" value="InterPro"/>
</dbReference>
<dbReference type="GO" id="GO:0032259">
    <property type="term" value="P:methylation"/>
    <property type="evidence" value="ECO:0007669"/>
    <property type="project" value="UniProtKB-KW"/>
</dbReference>
<dbReference type="GO" id="GO:0006396">
    <property type="term" value="P:RNA processing"/>
    <property type="evidence" value="ECO:0007669"/>
    <property type="project" value="InterPro"/>
</dbReference>
<dbReference type="CDD" id="cd18103">
    <property type="entry name" value="SpoU-like_RlmB"/>
    <property type="match status" value="1"/>
</dbReference>
<dbReference type="FunFam" id="3.30.1330.30:FF:000024">
    <property type="entry name" value="Putative tRNA/rRNA methyltransferase"/>
    <property type="match status" value="1"/>
</dbReference>
<dbReference type="FunFam" id="3.40.1280.10:FF:000015">
    <property type="entry name" value="Putative tRNA/rRNA methyltransferase"/>
    <property type="match status" value="1"/>
</dbReference>
<dbReference type="Gene3D" id="3.30.1330.30">
    <property type="match status" value="1"/>
</dbReference>
<dbReference type="Gene3D" id="3.40.1280.10">
    <property type="match status" value="1"/>
</dbReference>
<dbReference type="InterPro" id="IPR029028">
    <property type="entry name" value="Alpha/beta_knot_MTases"/>
</dbReference>
<dbReference type="InterPro" id="IPR029064">
    <property type="entry name" value="Ribosomal_eL30-like_sf"/>
</dbReference>
<dbReference type="InterPro" id="IPR004441">
    <property type="entry name" value="rRNA_MeTrfase_TrmH"/>
</dbReference>
<dbReference type="InterPro" id="IPR001537">
    <property type="entry name" value="SpoU_MeTrfase"/>
</dbReference>
<dbReference type="InterPro" id="IPR013123">
    <property type="entry name" value="SpoU_subst-bd"/>
</dbReference>
<dbReference type="InterPro" id="IPR029026">
    <property type="entry name" value="tRNA_m1G_MTases_N"/>
</dbReference>
<dbReference type="NCBIfam" id="TIGR00186">
    <property type="entry name" value="rRNA_methyl_3"/>
    <property type="match status" value="1"/>
</dbReference>
<dbReference type="PANTHER" id="PTHR46429">
    <property type="entry name" value="23S RRNA (GUANOSINE-2'-O-)-METHYLTRANSFERASE RLMB"/>
    <property type="match status" value="1"/>
</dbReference>
<dbReference type="PANTHER" id="PTHR46429:SF1">
    <property type="entry name" value="23S RRNA (GUANOSINE-2'-O-)-METHYLTRANSFERASE RLMB"/>
    <property type="match status" value="1"/>
</dbReference>
<dbReference type="Pfam" id="PF00588">
    <property type="entry name" value="SpoU_methylase"/>
    <property type="match status" value="1"/>
</dbReference>
<dbReference type="Pfam" id="PF08032">
    <property type="entry name" value="SpoU_sub_bind"/>
    <property type="match status" value="1"/>
</dbReference>
<dbReference type="SMART" id="SM00967">
    <property type="entry name" value="SpoU_sub_bind"/>
    <property type="match status" value="1"/>
</dbReference>
<dbReference type="SUPFAM" id="SSF75217">
    <property type="entry name" value="alpha/beta knot"/>
    <property type="match status" value="1"/>
</dbReference>
<dbReference type="SUPFAM" id="SSF55315">
    <property type="entry name" value="L30e-like"/>
    <property type="match status" value="1"/>
</dbReference>
<protein>
    <recommendedName>
        <fullName>Uncharacterized tRNA/rRNA methyltransferase Mflv_1447</fullName>
        <ecNumber>2.1.1.-</ecNumber>
    </recommendedName>
</protein>
<proteinExistence type="inferred from homology"/>
<name>Y1447_MYCGI</name>
<feature type="chain" id="PRO_0000379572" description="Uncharacterized tRNA/rRNA methyltransferase Mflv_1447">
    <location>
        <begin position="1"/>
        <end position="314"/>
    </location>
</feature>
<feature type="region of interest" description="Disordered" evidence="2">
    <location>
        <begin position="1"/>
        <end position="70"/>
    </location>
</feature>
<feature type="compositionally biased region" description="Basic residues" evidence="2">
    <location>
        <begin position="44"/>
        <end position="65"/>
    </location>
</feature>
<feature type="binding site" evidence="1">
    <location>
        <position position="265"/>
    </location>
    <ligand>
        <name>S-adenosyl-L-methionine</name>
        <dbReference type="ChEBI" id="CHEBI:59789"/>
    </ligand>
</feature>
<feature type="binding site" evidence="1">
    <location>
        <position position="285"/>
    </location>
    <ligand>
        <name>S-adenosyl-L-methionine</name>
        <dbReference type="ChEBI" id="CHEBI:59789"/>
    </ligand>
</feature>
<feature type="binding site" evidence="1">
    <location>
        <position position="294"/>
    </location>
    <ligand>
        <name>S-adenosyl-L-methionine</name>
        <dbReference type="ChEBI" id="CHEBI:59789"/>
    </ligand>
</feature>
<keyword id="KW-0489">Methyltransferase</keyword>
<keyword id="KW-0949">S-adenosyl-L-methionine</keyword>
<keyword id="KW-0808">Transferase</keyword>
<comment type="similarity">
    <text evidence="3">Belongs to the class IV-like SAM-binding methyltransferase superfamily. RNA methyltransferase TrmH family.</text>
</comment>
<sequence length="314" mass="32829">MAGNSQRRGAVRKAGTKKGPQVGSGGVRRRGLEGRGATPPAHERPHHPAGKRAAKAARQAQGRHKKTDDTEIVLGRNPVVECLRAGVPATALYVALGTDADERLTESVQMAADRGISILEVQRHDLDRMAANGLHQGIALQVPPYAYAHPDDLLRDAKSDAAPALLVALDNISDPRNLGAIVRSVAAFGGHGVVLPQRRSASVTAVAWRTSAGAAARTPVARATNLNRTLKQYADAGLQVVGLDAGGDTTIDEIDGLTPTIVVVGSEGKGLSRLVRENCDRIVSIPMAGPTESLNASVAAGVVLAEIARQRRLS</sequence>
<evidence type="ECO:0000250" key="1"/>
<evidence type="ECO:0000256" key="2">
    <source>
        <dbReference type="SAM" id="MobiDB-lite"/>
    </source>
</evidence>
<evidence type="ECO:0000305" key="3"/>
<organism>
    <name type="scientific">Mycolicibacterium gilvum (strain PYR-GCK)</name>
    <name type="common">Mycobacterium gilvum (strain PYR-GCK)</name>
    <dbReference type="NCBI Taxonomy" id="350054"/>
    <lineage>
        <taxon>Bacteria</taxon>
        <taxon>Bacillati</taxon>
        <taxon>Actinomycetota</taxon>
        <taxon>Actinomycetes</taxon>
        <taxon>Mycobacteriales</taxon>
        <taxon>Mycobacteriaceae</taxon>
        <taxon>Mycolicibacterium</taxon>
    </lineage>
</organism>
<gene>
    <name type="ordered locus">Mflv_1447</name>
</gene>
<reference key="1">
    <citation type="submission" date="2007-04" db="EMBL/GenBank/DDBJ databases">
        <title>Complete sequence of chromosome of Mycobacterium gilvum PYR-GCK.</title>
        <authorList>
            <consortium name="US DOE Joint Genome Institute"/>
            <person name="Copeland A."/>
            <person name="Lucas S."/>
            <person name="Lapidus A."/>
            <person name="Barry K."/>
            <person name="Detter J.C."/>
            <person name="Glavina del Rio T."/>
            <person name="Hammon N."/>
            <person name="Israni S."/>
            <person name="Dalin E."/>
            <person name="Tice H."/>
            <person name="Pitluck S."/>
            <person name="Chain P."/>
            <person name="Malfatti S."/>
            <person name="Shin M."/>
            <person name="Vergez L."/>
            <person name="Schmutz J."/>
            <person name="Larimer F."/>
            <person name="Land M."/>
            <person name="Hauser L."/>
            <person name="Kyrpides N."/>
            <person name="Mikhailova N."/>
            <person name="Miller C."/>
            <person name="Richardson P."/>
        </authorList>
    </citation>
    <scope>NUCLEOTIDE SEQUENCE [LARGE SCALE GENOMIC DNA]</scope>
    <source>
        <strain>PYR-GCK</strain>
    </source>
</reference>
<accession>A4T5L0</accession>